<dbReference type="EC" id="5.3.1.16"/>
<dbReference type="EMBL" id="U92974">
    <property type="protein sequence ID" value="AAB81908.1"/>
    <property type="molecule type" value="Genomic_DNA"/>
</dbReference>
<dbReference type="EMBL" id="AE005176">
    <property type="protein sequence ID" value="AAK05311.1"/>
    <property type="molecule type" value="Genomic_DNA"/>
</dbReference>
<dbReference type="PIR" id="A47754">
    <property type="entry name" value="A47754"/>
</dbReference>
<dbReference type="PIR" id="E86776">
    <property type="entry name" value="E86776"/>
</dbReference>
<dbReference type="RefSeq" id="NP_267369.1">
    <property type="nucleotide sequence ID" value="NC_002662.1"/>
</dbReference>
<dbReference type="SMR" id="Q02131"/>
<dbReference type="PaxDb" id="272623-L0070"/>
<dbReference type="EnsemblBacteria" id="AAK05311">
    <property type="protein sequence ID" value="AAK05311"/>
    <property type="gene ID" value="L0070"/>
</dbReference>
<dbReference type="KEGG" id="lla:L0070"/>
<dbReference type="PATRIC" id="fig|272623.7.peg.1310"/>
<dbReference type="eggNOG" id="COG0106">
    <property type="taxonomic scope" value="Bacteria"/>
</dbReference>
<dbReference type="HOGENOM" id="CLU_048577_1_2_9"/>
<dbReference type="OrthoDB" id="9807749at2"/>
<dbReference type="UniPathway" id="UPA00031">
    <property type="reaction ID" value="UER00009"/>
</dbReference>
<dbReference type="Proteomes" id="UP000002196">
    <property type="component" value="Chromosome"/>
</dbReference>
<dbReference type="GO" id="GO:0005737">
    <property type="term" value="C:cytoplasm"/>
    <property type="evidence" value="ECO:0007669"/>
    <property type="project" value="UniProtKB-SubCell"/>
</dbReference>
<dbReference type="GO" id="GO:0003949">
    <property type="term" value="F:1-(5-phosphoribosyl)-5-[(5-phosphoribosylamino)methylideneamino]imidazole-4-carboxamide isomerase activity"/>
    <property type="evidence" value="ECO:0007669"/>
    <property type="project" value="UniProtKB-UniRule"/>
</dbReference>
<dbReference type="GO" id="GO:0000105">
    <property type="term" value="P:L-histidine biosynthetic process"/>
    <property type="evidence" value="ECO:0007669"/>
    <property type="project" value="UniProtKB-UniRule"/>
</dbReference>
<dbReference type="GO" id="GO:0000162">
    <property type="term" value="P:L-tryptophan biosynthetic process"/>
    <property type="evidence" value="ECO:0007669"/>
    <property type="project" value="TreeGrafter"/>
</dbReference>
<dbReference type="CDD" id="cd04732">
    <property type="entry name" value="HisA"/>
    <property type="match status" value="1"/>
</dbReference>
<dbReference type="FunFam" id="3.20.20.70:FF:000009">
    <property type="entry name" value="1-(5-phosphoribosyl)-5-[(5-phosphoribosylamino)methylideneamino] imidazole-4-carboxamide isomerase"/>
    <property type="match status" value="1"/>
</dbReference>
<dbReference type="Gene3D" id="3.20.20.70">
    <property type="entry name" value="Aldolase class I"/>
    <property type="match status" value="1"/>
</dbReference>
<dbReference type="HAMAP" id="MF_01014">
    <property type="entry name" value="HisA"/>
    <property type="match status" value="1"/>
</dbReference>
<dbReference type="InterPro" id="IPR013785">
    <property type="entry name" value="Aldolase_TIM"/>
</dbReference>
<dbReference type="InterPro" id="IPR006062">
    <property type="entry name" value="His_biosynth"/>
</dbReference>
<dbReference type="InterPro" id="IPR006063">
    <property type="entry name" value="HisA_bact_arch"/>
</dbReference>
<dbReference type="InterPro" id="IPR044524">
    <property type="entry name" value="Isoase_HisA-like"/>
</dbReference>
<dbReference type="InterPro" id="IPR023016">
    <property type="entry name" value="Isoase_HisA-like_bact"/>
</dbReference>
<dbReference type="InterPro" id="IPR011060">
    <property type="entry name" value="RibuloseP-bd_barrel"/>
</dbReference>
<dbReference type="NCBIfam" id="TIGR00007">
    <property type="entry name" value="1-(5-phosphoribosyl)-5-[(5-phosphoribosylamino)methylideneamino]imidazole-4-carboxamide isomerase"/>
    <property type="match status" value="1"/>
</dbReference>
<dbReference type="PANTHER" id="PTHR43090">
    <property type="entry name" value="1-(5-PHOSPHORIBOSYL)-5-[(5-PHOSPHORIBOSYLAMINO)METHYLIDENEAMINO] IMIDAZOLE-4-CARBOXAMIDE ISOMERASE"/>
    <property type="match status" value="1"/>
</dbReference>
<dbReference type="PANTHER" id="PTHR43090:SF2">
    <property type="entry name" value="1-(5-PHOSPHORIBOSYL)-5-[(5-PHOSPHORIBOSYLAMINO)METHYLIDENEAMINO] IMIDAZOLE-4-CARBOXAMIDE ISOMERASE"/>
    <property type="match status" value="1"/>
</dbReference>
<dbReference type="Pfam" id="PF00977">
    <property type="entry name" value="His_biosynth"/>
    <property type="match status" value="1"/>
</dbReference>
<dbReference type="SUPFAM" id="SSF51366">
    <property type="entry name" value="Ribulose-phoshate binding barrel"/>
    <property type="match status" value="1"/>
</dbReference>
<accession>Q02131</accession>
<evidence type="ECO:0000250" key="1"/>
<evidence type="ECO:0000305" key="2"/>
<protein>
    <recommendedName>
        <fullName>1-(5-phosphoribosyl)-5-[(5-phosphoribosylamino)methylideneamino] imidazole-4-carboxamide isomerase</fullName>
        <ecNumber>5.3.1.16</ecNumber>
    </recommendedName>
    <alternativeName>
        <fullName>Phosphoribosylformimino-5-aminoimidazole carboxamide ribotide isomerase</fullName>
    </alternativeName>
</protein>
<comment type="catalytic activity">
    <reaction>
        <text>1-(5-phospho-beta-D-ribosyl)-5-[(5-phospho-beta-D-ribosylamino)methylideneamino]imidazole-4-carboxamide = 5-[(5-phospho-1-deoxy-D-ribulos-1-ylimino)methylamino]-1-(5-phospho-beta-D-ribosyl)imidazole-4-carboxamide</text>
        <dbReference type="Rhea" id="RHEA:15469"/>
        <dbReference type="ChEBI" id="CHEBI:58435"/>
        <dbReference type="ChEBI" id="CHEBI:58525"/>
        <dbReference type="EC" id="5.3.1.16"/>
    </reaction>
</comment>
<comment type="pathway">
    <text>Amino-acid biosynthesis; L-histidine biosynthesis; L-histidine from 5-phospho-alpha-D-ribose 1-diphosphate: step 4/9.</text>
</comment>
<comment type="subcellular location">
    <subcellularLocation>
        <location evidence="1">Cytoplasm</location>
    </subcellularLocation>
</comment>
<comment type="similarity">
    <text evidence="2">Belongs to the HisA/HisF family.</text>
</comment>
<comment type="caution">
    <text evidence="2">This protein is inactive in the dairy strain IL1403. The histidine biosynthesis pathway is not functional in the dairy strain IL1403.</text>
</comment>
<organism>
    <name type="scientific">Lactococcus lactis subsp. lactis (strain IL1403)</name>
    <name type="common">Streptococcus lactis</name>
    <dbReference type="NCBI Taxonomy" id="272623"/>
    <lineage>
        <taxon>Bacteria</taxon>
        <taxon>Bacillati</taxon>
        <taxon>Bacillota</taxon>
        <taxon>Bacilli</taxon>
        <taxon>Lactobacillales</taxon>
        <taxon>Streptococcaceae</taxon>
        <taxon>Lactococcus</taxon>
    </lineage>
</organism>
<feature type="chain" id="PRO_0000142012" description="1-(5-phosphoribosyl)-5-[(5-phosphoribosylamino)methylideneamino] imidazole-4-carboxamide isomerase">
    <location>
        <begin position="1"/>
        <end position="239"/>
    </location>
</feature>
<feature type="active site" description="Proton acceptor" evidence="1">
    <location>
        <position position="8"/>
    </location>
</feature>
<feature type="active site" description="Proton donor" evidence="1">
    <location>
        <position position="131"/>
    </location>
</feature>
<feature type="sequence variant" description="In strain: IL1403.">
    <original>N</original>
    <variation>T</variation>
    <location>
        <position position="31"/>
    </location>
</feature>
<feature type="sequence variant" description="In strain: IL1403.">
    <original>GAK</original>
    <variation>DAN</variation>
    <location>
        <begin position="54"/>
        <end position="56"/>
    </location>
</feature>
<feature type="sequence variant" description="In strain: IL1403.">
    <original>L</original>
    <variation>I</variation>
    <location>
        <position position="65"/>
    </location>
</feature>
<feature type="sequence variant" description="In strain: IL1403.">
    <original>D</original>
    <variation>E</variation>
    <location>
        <position position="71"/>
    </location>
</feature>
<feature type="sequence variant" description="In strain: IL1403.">
    <original>RIV</original>
    <variation>KII</variation>
    <location>
        <begin position="125"/>
        <end position="127"/>
    </location>
</feature>
<feature type="sequence variant" description="In strain: IL1403.">
    <original>G</original>
    <variation>K</variation>
    <location>
        <position position="227"/>
    </location>
</feature>
<feature type="sequence conflict" description="In Ref. 2." evidence="2" ref="2">
    <original>T</original>
    <variation>S</variation>
    <location>
        <position position="73"/>
    </location>
</feature>
<feature type="sequence conflict" description="In Ref. 3; AAK05311." evidence="2" ref="3">
    <original>N</original>
    <variation>S</variation>
    <location>
        <position position="191"/>
    </location>
</feature>
<reference key="1">
    <citation type="journal article" date="1992" name="J. Bacteriol.">
        <title>Histidine biosynthesis genes in Lactococcus lactis subsp. lactis.</title>
        <authorList>
            <person name="Delorme C."/>
            <person name="Ehrlich S.D."/>
            <person name="Renault P."/>
        </authorList>
    </citation>
    <scope>NUCLEOTIDE SEQUENCE [GENOMIC DNA]</scope>
    <source>
        <strain>NCDO 2118</strain>
    </source>
</reference>
<reference key="2">
    <citation type="journal article" date="1993" name="J. Bacteriol.">
        <title>Gene inactivation in Lactococcus lactis: histidine biosynthesis.</title>
        <authorList>
            <person name="Delorme C."/>
            <person name="Godon J.-J."/>
            <person name="Ehrlich S.D."/>
            <person name="Renault P."/>
        </authorList>
    </citation>
    <scope>NUCLEOTIDE SEQUENCE [GENOMIC DNA]</scope>
    <source>
        <strain>IL1403</strain>
    </source>
</reference>
<reference key="3">
    <citation type="journal article" date="2001" name="Genome Res.">
        <title>The complete genome sequence of the lactic acid bacterium Lactococcus lactis ssp. lactis IL1403.</title>
        <authorList>
            <person name="Bolotin A."/>
            <person name="Wincker P."/>
            <person name="Mauger S."/>
            <person name="Jaillon O."/>
            <person name="Malarme K."/>
            <person name="Weissenbach J."/>
            <person name="Ehrlich S.D."/>
            <person name="Sorokin A."/>
        </authorList>
    </citation>
    <scope>NUCLEOTIDE SEQUENCE [LARGE SCALE GENOMIC DNA]</scope>
    <source>
        <strain>IL1403</strain>
    </source>
</reference>
<keyword id="KW-0028">Amino-acid biosynthesis</keyword>
<keyword id="KW-0963">Cytoplasm</keyword>
<keyword id="KW-0368">Histidine biosynthesis</keyword>
<keyword id="KW-0413">Isomerase</keyword>
<keyword id="KW-1185">Reference proteome</keyword>
<sequence>MKIIPAIDLQNGEAVRLYKGDYDKKTVYSKNPLEIAQKFERMGATDLHLVDLDGAKIGQTRNLELVRKIKDETRLKIEIGGGIRDFDTVRMYLEQIGVERVILGTAAVEKPDFLKELLIKYGPSRIVVGVDIREGFVSTSGWLEKTSLPYLSFLKKLERIGVKTTIITDISKDGTLTGPNFKLYDEISKENSLNVIISGGVKDNSDIQRATRSDFYGIIVGKAYYEGKINLEKEFRNAN</sequence>
<name>HIS4_LACLA</name>
<gene>
    <name type="primary">hisA</name>
    <name type="ordered locus">LL1213</name>
    <name type="ORF">L0070</name>
</gene>
<proteinExistence type="inferred from homology"/>